<accession>B2K1U3</accession>
<sequence length="174" mass="19916">MFIGDASILKPIQWCATEHPELPADIADWLMELGSMTRRFEQHCQRVHVEPQRECFITRDALGEEAEHLPVSQRYWLREIVLFGDNVPWLLGRTVIPEETLSGPDRALVDLGTLPLGRYLFSGDALTRDYIHVGRQDNLWARRSLLRLSGNPLLLTEVFLPASPLYTHCDSIPK</sequence>
<evidence type="ECO:0000255" key="1">
    <source>
        <dbReference type="HAMAP-Rule" id="MF_01632"/>
    </source>
</evidence>
<feature type="chain" id="PRO_1000186541" description="Chorismate pyruvate-lyase">
    <location>
        <begin position="1"/>
        <end position="174"/>
    </location>
</feature>
<feature type="binding site" evidence="1">
    <location>
        <position position="36"/>
    </location>
    <ligand>
        <name>substrate</name>
    </ligand>
</feature>
<feature type="binding site" evidence="1">
    <location>
        <position position="78"/>
    </location>
    <ligand>
        <name>substrate</name>
    </ligand>
</feature>
<feature type="binding site" evidence="1">
    <location>
        <position position="116"/>
    </location>
    <ligand>
        <name>substrate</name>
    </ligand>
</feature>
<feature type="binding site" evidence="1">
    <location>
        <position position="157"/>
    </location>
    <ligand>
        <name>substrate</name>
    </ligand>
</feature>
<dbReference type="EC" id="4.1.3.40" evidence="1"/>
<dbReference type="EMBL" id="CP001048">
    <property type="protein sequence ID" value="ACC87378.1"/>
    <property type="molecule type" value="Genomic_DNA"/>
</dbReference>
<dbReference type="RefSeq" id="WP_002209087.1">
    <property type="nucleotide sequence ID" value="NZ_CP009780.1"/>
</dbReference>
<dbReference type="SMR" id="B2K1U3"/>
<dbReference type="GeneID" id="57974294"/>
<dbReference type="KEGG" id="ypb:YPTS_0389"/>
<dbReference type="PATRIC" id="fig|502801.10.peg.4067"/>
<dbReference type="UniPathway" id="UPA00232"/>
<dbReference type="GO" id="GO:0005829">
    <property type="term" value="C:cytosol"/>
    <property type="evidence" value="ECO:0007669"/>
    <property type="project" value="TreeGrafter"/>
</dbReference>
<dbReference type="GO" id="GO:0008813">
    <property type="term" value="F:chorismate lyase activity"/>
    <property type="evidence" value="ECO:0007669"/>
    <property type="project" value="UniProtKB-UniRule"/>
</dbReference>
<dbReference type="GO" id="GO:0042866">
    <property type="term" value="P:pyruvate biosynthetic process"/>
    <property type="evidence" value="ECO:0007669"/>
    <property type="project" value="UniProtKB-UniRule"/>
</dbReference>
<dbReference type="GO" id="GO:0006744">
    <property type="term" value="P:ubiquinone biosynthetic process"/>
    <property type="evidence" value="ECO:0007669"/>
    <property type="project" value="UniProtKB-UniRule"/>
</dbReference>
<dbReference type="Gene3D" id="3.40.1410.10">
    <property type="entry name" value="Chorismate lyase-like"/>
    <property type="match status" value="1"/>
</dbReference>
<dbReference type="HAMAP" id="MF_01632">
    <property type="entry name" value="UbiC"/>
    <property type="match status" value="1"/>
</dbReference>
<dbReference type="InterPro" id="IPR007440">
    <property type="entry name" value="Chorismate--pyruvate_lyase"/>
</dbReference>
<dbReference type="InterPro" id="IPR028978">
    <property type="entry name" value="Chorismate_lyase_/UTRA_dom_sf"/>
</dbReference>
<dbReference type="NCBIfam" id="NF008656">
    <property type="entry name" value="PRK11655.1"/>
    <property type="match status" value="1"/>
</dbReference>
<dbReference type="PANTHER" id="PTHR38683">
    <property type="entry name" value="CHORISMATE PYRUVATE-LYASE"/>
    <property type="match status" value="1"/>
</dbReference>
<dbReference type="PANTHER" id="PTHR38683:SF1">
    <property type="entry name" value="CHORISMATE PYRUVATE-LYASE"/>
    <property type="match status" value="1"/>
</dbReference>
<dbReference type="Pfam" id="PF04345">
    <property type="entry name" value="Chor_lyase"/>
    <property type="match status" value="1"/>
</dbReference>
<dbReference type="SUPFAM" id="SSF64288">
    <property type="entry name" value="Chorismate lyase-like"/>
    <property type="match status" value="1"/>
</dbReference>
<comment type="function">
    <text evidence="1">Removes the pyruvyl group from chorismate, with concomitant aromatization of the ring, to provide 4-hydroxybenzoate (4HB) for the ubiquinone pathway.</text>
</comment>
<comment type="catalytic activity">
    <reaction evidence="1">
        <text>chorismate = 4-hydroxybenzoate + pyruvate</text>
        <dbReference type="Rhea" id="RHEA:16505"/>
        <dbReference type="ChEBI" id="CHEBI:15361"/>
        <dbReference type="ChEBI" id="CHEBI:17879"/>
        <dbReference type="ChEBI" id="CHEBI:29748"/>
        <dbReference type="EC" id="4.1.3.40"/>
    </reaction>
</comment>
<comment type="pathway">
    <text evidence="1">Cofactor biosynthesis; ubiquinone biosynthesis.</text>
</comment>
<comment type="subunit">
    <text evidence="1">Monomer.</text>
</comment>
<comment type="subcellular location">
    <subcellularLocation>
        <location evidence="1">Cytoplasm</location>
    </subcellularLocation>
</comment>
<comment type="similarity">
    <text evidence="1">Belongs to the UbiC family.</text>
</comment>
<proteinExistence type="inferred from homology"/>
<gene>
    <name evidence="1" type="primary">ubiC</name>
    <name type="ordered locus">YPTS_0389</name>
</gene>
<organism>
    <name type="scientific">Yersinia pseudotuberculosis serotype IB (strain PB1/+)</name>
    <dbReference type="NCBI Taxonomy" id="502801"/>
    <lineage>
        <taxon>Bacteria</taxon>
        <taxon>Pseudomonadati</taxon>
        <taxon>Pseudomonadota</taxon>
        <taxon>Gammaproteobacteria</taxon>
        <taxon>Enterobacterales</taxon>
        <taxon>Yersiniaceae</taxon>
        <taxon>Yersinia</taxon>
    </lineage>
</organism>
<reference key="1">
    <citation type="submission" date="2008-04" db="EMBL/GenBank/DDBJ databases">
        <title>Complete sequence of Yersinia pseudotuberculosis PB1/+.</title>
        <authorList>
            <person name="Copeland A."/>
            <person name="Lucas S."/>
            <person name="Lapidus A."/>
            <person name="Glavina del Rio T."/>
            <person name="Dalin E."/>
            <person name="Tice H."/>
            <person name="Bruce D."/>
            <person name="Goodwin L."/>
            <person name="Pitluck S."/>
            <person name="Munk A.C."/>
            <person name="Brettin T."/>
            <person name="Detter J.C."/>
            <person name="Han C."/>
            <person name="Tapia R."/>
            <person name="Schmutz J."/>
            <person name="Larimer F."/>
            <person name="Land M."/>
            <person name="Hauser L."/>
            <person name="Challacombe J.F."/>
            <person name="Green L."/>
            <person name="Lindler L.E."/>
            <person name="Nikolich M.P."/>
            <person name="Richardson P."/>
        </authorList>
    </citation>
    <scope>NUCLEOTIDE SEQUENCE [LARGE SCALE GENOMIC DNA]</scope>
    <source>
        <strain>PB1/+</strain>
    </source>
</reference>
<name>UBIC_YERPB</name>
<keyword id="KW-0963">Cytoplasm</keyword>
<keyword id="KW-0456">Lyase</keyword>
<keyword id="KW-0670">Pyruvate</keyword>
<keyword id="KW-0831">Ubiquinone biosynthesis</keyword>
<protein>
    <recommendedName>
        <fullName evidence="1">Chorismate pyruvate-lyase</fullName>
        <shortName evidence="1">CL</shortName>
        <shortName evidence="1">CPL</shortName>
        <ecNumber evidence="1">4.1.3.40</ecNumber>
    </recommendedName>
</protein>